<name>ZN444_HUMAN</name>
<feature type="chain" id="PRO_0000047593" description="Zinc finger protein 444">
    <location>
        <begin position="1"/>
        <end position="327"/>
    </location>
</feature>
<feature type="domain" description="SCAN box" evidence="2">
    <location>
        <begin position="20"/>
        <end position="104"/>
    </location>
</feature>
<feature type="zinc finger region" description="C2H2-type 1" evidence="1">
    <location>
        <begin position="179"/>
        <end position="201"/>
    </location>
</feature>
<feature type="zinc finger region" description="C2H2-type 2" evidence="1">
    <location>
        <begin position="207"/>
        <end position="229"/>
    </location>
</feature>
<feature type="zinc finger region" description="C2H2-type 3" evidence="1">
    <location>
        <begin position="250"/>
        <end position="272"/>
    </location>
</feature>
<feature type="zinc finger region" description="C2H2-type 4" evidence="1">
    <location>
        <begin position="278"/>
        <end position="300"/>
    </location>
</feature>
<feature type="region of interest" description="Disordered" evidence="3">
    <location>
        <begin position="101"/>
        <end position="171"/>
    </location>
</feature>
<feature type="region of interest" description="Disordered" evidence="3">
    <location>
        <begin position="220"/>
        <end position="243"/>
    </location>
</feature>
<feature type="region of interest" description="Disordered" evidence="3">
    <location>
        <begin position="305"/>
        <end position="327"/>
    </location>
</feature>
<feature type="compositionally biased region" description="Polar residues" evidence="3">
    <location>
        <begin position="106"/>
        <end position="118"/>
    </location>
</feature>
<feature type="compositionally biased region" description="Low complexity" evidence="3">
    <location>
        <begin position="134"/>
        <end position="148"/>
    </location>
</feature>
<feature type="compositionally biased region" description="Low complexity" evidence="3">
    <location>
        <begin position="305"/>
        <end position="314"/>
    </location>
</feature>
<feature type="modified residue" description="N-acetylmethionine" evidence="9">
    <location>
        <position position="1"/>
    </location>
</feature>
<feature type="modified residue" description="Phosphoserine" evidence="9">
    <location>
        <position position="18"/>
    </location>
</feature>
<feature type="modified residue" description="Phosphoserine" evidence="11">
    <location>
        <position position="104"/>
    </location>
</feature>
<feature type="modified residue" description="Phosphoserine" evidence="8 10">
    <location>
        <position position="235"/>
    </location>
</feature>
<feature type="cross-link" description="Glycyl lysine isopeptide (Lys-Gly) (interchain with G-Cter in SUMO2)" evidence="12">
    <location>
        <position position="8"/>
    </location>
</feature>
<feature type="cross-link" description="Glycyl lysine isopeptide (Lys-Gly) (interchain with G-Cter in SUMO2)" evidence="12">
    <location>
        <position position="190"/>
    </location>
</feature>
<feature type="splice variant" id="VSP_008798" description="In isoform 2." evidence="4 5 6">
    <location>
        <position position="136"/>
    </location>
</feature>
<feature type="sequence conflict" description="In Ref. 4; BAA92028." evidence="7" ref="4">
    <original>L</original>
    <variation>P</variation>
    <location>
        <position position="49"/>
    </location>
</feature>
<protein>
    <recommendedName>
        <fullName>Zinc finger protein 444</fullName>
    </recommendedName>
    <alternativeName>
        <fullName>Endothelial zinc finger protein 2</fullName>
        <shortName>EZF-2</shortName>
    </alternativeName>
    <alternativeName>
        <fullName>Zinc finger and SCAN domain-containing protein 17</fullName>
    </alternativeName>
</protein>
<keyword id="KW-0007">Acetylation</keyword>
<keyword id="KW-0025">Alternative splicing</keyword>
<keyword id="KW-0238">DNA-binding</keyword>
<keyword id="KW-1017">Isopeptide bond</keyword>
<keyword id="KW-0479">Metal-binding</keyword>
<keyword id="KW-0539">Nucleus</keyword>
<keyword id="KW-0597">Phosphoprotein</keyword>
<keyword id="KW-1267">Proteomics identification</keyword>
<keyword id="KW-1185">Reference proteome</keyword>
<keyword id="KW-0677">Repeat</keyword>
<keyword id="KW-0804">Transcription</keyword>
<keyword id="KW-0805">Transcription regulation</keyword>
<keyword id="KW-0832">Ubl conjugation</keyword>
<keyword id="KW-0862">Zinc</keyword>
<keyword id="KW-0863">Zinc-finger</keyword>
<evidence type="ECO:0000255" key="1">
    <source>
        <dbReference type="PROSITE-ProRule" id="PRU00042"/>
    </source>
</evidence>
<evidence type="ECO:0000255" key="2">
    <source>
        <dbReference type="PROSITE-ProRule" id="PRU00187"/>
    </source>
</evidence>
<evidence type="ECO:0000256" key="3">
    <source>
        <dbReference type="SAM" id="MobiDB-lite"/>
    </source>
</evidence>
<evidence type="ECO:0000303" key="4">
    <source>
    </source>
</evidence>
<evidence type="ECO:0000303" key="5">
    <source>
    </source>
</evidence>
<evidence type="ECO:0000303" key="6">
    <source>
    </source>
</evidence>
<evidence type="ECO:0000305" key="7"/>
<evidence type="ECO:0007744" key="8">
    <source>
    </source>
</evidence>
<evidence type="ECO:0007744" key="9">
    <source>
    </source>
</evidence>
<evidence type="ECO:0007744" key="10">
    <source>
    </source>
</evidence>
<evidence type="ECO:0007744" key="11">
    <source>
    </source>
</evidence>
<evidence type="ECO:0007744" key="12">
    <source>
    </source>
</evidence>
<sequence length="327" mass="35204">MEVAVPVKQEAEGLALDSPWHRFRRFHLGDAPGPREALGLLRALCRDWLRPEVHTKEQMLELLVLEQFLSALPADTQAWVCSRQPQSGEEAVALLEELWGPAASPDGSSATRVPQDVTQGPGATGGKEDSGMIPLAGTAPGAEGPAPGDSQAVRPYKQEPSSPPLAPGLPAFLAAPGTTSCPECGKTSLKPAHLLRHRQSHSGEKPHACPECGKAFRRKEHLRRHRDTHPGSPGSPGPALRPLPAREKPHACCECGKTFYWREHLVRHRKTHSGARPFACWECGKGFGRREHVLRHQRIHGRAAASAQGAVAPGPDGGGPFPPWPLG</sequence>
<gene>
    <name type="primary">ZNF444</name>
    <name type="synonym">EZF2</name>
    <name type="synonym">ZSCAN17</name>
</gene>
<reference key="1">
    <citation type="journal article" date="2002" name="J. Biol. Chem.">
        <title>Characterization of the human gene encoding the scavenger receptor expressed by endothelial cell and its regulation by a novel transcription factor, endothelial zinc finger protein-2.</title>
        <authorList>
            <person name="Adachi H."/>
            <person name="Tsujimoto M."/>
        </authorList>
    </citation>
    <scope>NUCLEOTIDE SEQUENCE [MRNA] (ISOFORMS 1 AND 2)</scope>
</reference>
<reference key="2">
    <citation type="journal article" date="2007" name="BMC Genomics">
        <title>The full-ORF clone resource of the German cDNA consortium.</title>
        <authorList>
            <person name="Bechtel S."/>
            <person name="Rosenfelder H."/>
            <person name="Duda A."/>
            <person name="Schmidt C.P."/>
            <person name="Ernst U."/>
            <person name="Wellenreuther R."/>
            <person name="Mehrle A."/>
            <person name="Schuster C."/>
            <person name="Bahr A."/>
            <person name="Bloecker H."/>
            <person name="Heubner D."/>
            <person name="Hoerlein A."/>
            <person name="Michel G."/>
            <person name="Wedler H."/>
            <person name="Koehrer K."/>
            <person name="Ottenwaelder B."/>
            <person name="Poustka A."/>
            <person name="Wiemann S."/>
            <person name="Schupp I."/>
        </authorList>
    </citation>
    <scope>NUCLEOTIDE SEQUENCE [LARGE SCALE MRNA] (ISOFORM 1)</scope>
    <source>
        <tissue>Uterus</tissue>
    </source>
</reference>
<reference key="3">
    <citation type="submission" date="2002-01" db="EMBL/GenBank/DDBJ databases">
        <title>The nucleotide sequence of a long cDNA clone isolated from human spleen.</title>
        <authorList>
            <person name="Jikuya H."/>
            <person name="Takano J."/>
            <person name="Nomura N."/>
            <person name="Kikuno R."/>
            <person name="Nagase T."/>
            <person name="Ohara O."/>
        </authorList>
    </citation>
    <scope>NUCLEOTIDE SEQUENCE [LARGE SCALE MRNA] (ISOFORM 1)</scope>
    <source>
        <tissue>Spleen</tissue>
    </source>
</reference>
<reference key="4">
    <citation type="journal article" date="2004" name="Nat. Genet.">
        <title>Complete sequencing and characterization of 21,243 full-length human cDNAs.</title>
        <authorList>
            <person name="Ota T."/>
            <person name="Suzuki Y."/>
            <person name="Nishikawa T."/>
            <person name="Otsuki T."/>
            <person name="Sugiyama T."/>
            <person name="Irie R."/>
            <person name="Wakamatsu A."/>
            <person name="Hayashi K."/>
            <person name="Sato H."/>
            <person name="Nagai K."/>
            <person name="Kimura K."/>
            <person name="Makita H."/>
            <person name="Sekine M."/>
            <person name="Obayashi M."/>
            <person name="Nishi T."/>
            <person name="Shibahara T."/>
            <person name="Tanaka T."/>
            <person name="Ishii S."/>
            <person name="Yamamoto J."/>
            <person name="Saito K."/>
            <person name="Kawai Y."/>
            <person name="Isono Y."/>
            <person name="Nakamura Y."/>
            <person name="Nagahari K."/>
            <person name="Murakami K."/>
            <person name="Yasuda T."/>
            <person name="Iwayanagi T."/>
            <person name="Wagatsuma M."/>
            <person name="Shiratori A."/>
            <person name="Sudo H."/>
            <person name="Hosoiri T."/>
            <person name="Kaku Y."/>
            <person name="Kodaira H."/>
            <person name="Kondo H."/>
            <person name="Sugawara M."/>
            <person name="Takahashi M."/>
            <person name="Kanda K."/>
            <person name="Yokoi T."/>
            <person name="Furuya T."/>
            <person name="Kikkawa E."/>
            <person name="Omura Y."/>
            <person name="Abe K."/>
            <person name="Kamihara K."/>
            <person name="Katsuta N."/>
            <person name="Sato K."/>
            <person name="Tanikawa M."/>
            <person name="Yamazaki M."/>
            <person name="Ninomiya K."/>
            <person name="Ishibashi T."/>
            <person name="Yamashita H."/>
            <person name="Murakawa K."/>
            <person name="Fujimori K."/>
            <person name="Tanai H."/>
            <person name="Kimata M."/>
            <person name="Watanabe M."/>
            <person name="Hiraoka S."/>
            <person name="Chiba Y."/>
            <person name="Ishida S."/>
            <person name="Ono Y."/>
            <person name="Takiguchi S."/>
            <person name="Watanabe S."/>
            <person name="Yosida M."/>
            <person name="Hotuta T."/>
            <person name="Kusano J."/>
            <person name="Kanehori K."/>
            <person name="Takahashi-Fujii A."/>
            <person name="Hara H."/>
            <person name="Tanase T.-O."/>
            <person name="Nomura Y."/>
            <person name="Togiya S."/>
            <person name="Komai F."/>
            <person name="Hara R."/>
            <person name="Takeuchi K."/>
            <person name="Arita M."/>
            <person name="Imose N."/>
            <person name="Musashino K."/>
            <person name="Yuuki H."/>
            <person name="Oshima A."/>
            <person name="Sasaki N."/>
            <person name="Aotsuka S."/>
            <person name="Yoshikawa Y."/>
            <person name="Matsunawa H."/>
            <person name="Ichihara T."/>
            <person name="Shiohata N."/>
            <person name="Sano S."/>
            <person name="Moriya S."/>
            <person name="Momiyama H."/>
            <person name="Satoh N."/>
            <person name="Takami S."/>
            <person name="Terashima Y."/>
            <person name="Suzuki O."/>
            <person name="Nakagawa S."/>
            <person name="Senoh A."/>
            <person name="Mizoguchi H."/>
            <person name="Goto Y."/>
            <person name="Shimizu F."/>
            <person name="Wakebe H."/>
            <person name="Hishigaki H."/>
            <person name="Watanabe T."/>
            <person name="Sugiyama A."/>
            <person name="Takemoto M."/>
            <person name="Kawakami B."/>
            <person name="Yamazaki M."/>
            <person name="Watanabe K."/>
            <person name="Kumagai A."/>
            <person name="Itakura S."/>
            <person name="Fukuzumi Y."/>
            <person name="Fujimori Y."/>
            <person name="Komiyama M."/>
            <person name="Tashiro H."/>
            <person name="Tanigami A."/>
            <person name="Fujiwara T."/>
            <person name="Ono T."/>
            <person name="Yamada K."/>
            <person name="Fujii Y."/>
            <person name="Ozaki K."/>
            <person name="Hirao M."/>
            <person name="Ohmori Y."/>
            <person name="Kawabata A."/>
            <person name="Hikiji T."/>
            <person name="Kobatake N."/>
            <person name="Inagaki H."/>
            <person name="Ikema Y."/>
            <person name="Okamoto S."/>
            <person name="Okitani R."/>
            <person name="Kawakami T."/>
            <person name="Noguchi S."/>
            <person name="Itoh T."/>
            <person name="Shigeta K."/>
            <person name="Senba T."/>
            <person name="Matsumura K."/>
            <person name="Nakajima Y."/>
            <person name="Mizuno T."/>
            <person name="Morinaga M."/>
            <person name="Sasaki M."/>
            <person name="Togashi T."/>
            <person name="Oyama M."/>
            <person name="Hata H."/>
            <person name="Watanabe M."/>
            <person name="Komatsu T."/>
            <person name="Mizushima-Sugano J."/>
            <person name="Satoh T."/>
            <person name="Shirai Y."/>
            <person name="Takahashi Y."/>
            <person name="Nakagawa K."/>
            <person name="Okumura K."/>
            <person name="Nagase T."/>
            <person name="Nomura N."/>
            <person name="Kikuchi H."/>
            <person name="Masuho Y."/>
            <person name="Yamashita R."/>
            <person name="Nakai K."/>
            <person name="Yada T."/>
            <person name="Nakamura Y."/>
            <person name="Ohara O."/>
            <person name="Isogai T."/>
            <person name="Sugano S."/>
        </authorList>
    </citation>
    <scope>NUCLEOTIDE SEQUENCE [LARGE SCALE MRNA] (ISOFORM 2)</scope>
    <source>
        <tissue>Placenta</tissue>
    </source>
</reference>
<reference key="5">
    <citation type="journal article" date="2004" name="Genome Res.">
        <title>The status, quality, and expansion of the NIH full-length cDNA project: the Mammalian Gene Collection (MGC).</title>
        <authorList>
            <consortium name="The MGC Project Team"/>
        </authorList>
    </citation>
    <scope>NUCLEOTIDE SEQUENCE [LARGE SCALE MRNA] (ISOFORM 2)</scope>
    <source>
        <tissue>Lung</tissue>
    </source>
</reference>
<reference key="6">
    <citation type="journal article" date="2008" name="Proc. Natl. Acad. Sci. U.S.A.">
        <title>A quantitative atlas of mitotic phosphorylation.</title>
        <authorList>
            <person name="Dephoure N."/>
            <person name="Zhou C."/>
            <person name="Villen J."/>
            <person name="Beausoleil S.A."/>
            <person name="Bakalarski C.E."/>
            <person name="Elledge S.J."/>
            <person name="Gygi S.P."/>
        </authorList>
    </citation>
    <scope>PHOSPHORYLATION [LARGE SCALE ANALYSIS] AT SER-235</scope>
    <scope>IDENTIFICATION BY MASS SPECTROMETRY [LARGE SCALE ANALYSIS]</scope>
    <source>
        <tissue>Cervix carcinoma</tissue>
    </source>
</reference>
<reference key="7">
    <citation type="journal article" date="2010" name="Sci. Signal.">
        <title>Quantitative phosphoproteomics reveals widespread full phosphorylation site occupancy during mitosis.</title>
        <authorList>
            <person name="Olsen J.V."/>
            <person name="Vermeulen M."/>
            <person name="Santamaria A."/>
            <person name="Kumar C."/>
            <person name="Miller M.L."/>
            <person name="Jensen L.J."/>
            <person name="Gnad F."/>
            <person name="Cox J."/>
            <person name="Jensen T.S."/>
            <person name="Nigg E.A."/>
            <person name="Brunak S."/>
            <person name="Mann M."/>
        </authorList>
    </citation>
    <scope>ACETYLATION [LARGE SCALE ANALYSIS] AT MET-1</scope>
    <scope>PHOSPHORYLATION [LARGE SCALE ANALYSIS] AT SER-18</scope>
    <scope>IDENTIFICATION BY MASS SPECTROMETRY [LARGE SCALE ANALYSIS]</scope>
    <source>
        <tissue>Cervix carcinoma</tissue>
    </source>
</reference>
<reference key="8">
    <citation type="journal article" date="2013" name="J. Proteome Res.">
        <title>Toward a comprehensive characterization of a human cancer cell phosphoproteome.</title>
        <authorList>
            <person name="Zhou H."/>
            <person name="Di Palma S."/>
            <person name="Preisinger C."/>
            <person name="Peng M."/>
            <person name="Polat A.N."/>
            <person name="Heck A.J."/>
            <person name="Mohammed S."/>
        </authorList>
    </citation>
    <scope>PHOSPHORYLATION [LARGE SCALE ANALYSIS] AT SER-235</scope>
    <scope>IDENTIFICATION BY MASS SPECTROMETRY [LARGE SCALE ANALYSIS]</scope>
    <source>
        <tissue>Erythroleukemia</tissue>
    </source>
</reference>
<reference key="9">
    <citation type="journal article" date="2014" name="J. Proteomics">
        <title>An enzyme assisted RP-RPLC approach for in-depth analysis of human liver phosphoproteome.</title>
        <authorList>
            <person name="Bian Y."/>
            <person name="Song C."/>
            <person name="Cheng K."/>
            <person name="Dong M."/>
            <person name="Wang F."/>
            <person name="Huang J."/>
            <person name="Sun D."/>
            <person name="Wang L."/>
            <person name="Ye M."/>
            <person name="Zou H."/>
        </authorList>
    </citation>
    <scope>PHOSPHORYLATION [LARGE SCALE ANALYSIS] AT SER-104</scope>
    <scope>IDENTIFICATION BY MASS SPECTROMETRY [LARGE SCALE ANALYSIS]</scope>
    <source>
        <tissue>Liver</tissue>
    </source>
</reference>
<reference key="10">
    <citation type="journal article" date="2017" name="Nat. Struct. Mol. Biol.">
        <title>Site-specific mapping of the human SUMO proteome reveals co-modification with phosphorylation.</title>
        <authorList>
            <person name="Hendriks I.A."/>
            <person name="Lyon D."/>
            <person name="Young C."/>
            <person name="Jensen L.J."/>
            <person name="Vertegaal A.C."/>
            <person name="Nielsen M.L."/>
        </authorList>
    </citation>
    <scope>SUMOYLATION [LARGE SCALE ANALYSIS] AT LYS-8 AND LYS-190</scope>
    <scope>IDENTIFICATION BY MASS SPECTROMETRY [LARGE SCALE ANALYSIS]</scope>
</reference>
<organism>
    <name type="scientific">Homo sapiens</name>
    <name type="common">Human</name>
    <dbReference type="NCBI Taxonomy" id="9606"/>
    <lineage>
        <taxon>Eukaryota</taxon>
        <taxon>Metazoa</taxon>
        <taxon>Chordata</taxon>
        <taxon>Craniata</taxon>
        <taxon>Vertebrata</taxon>
        <taxon>Euteleostomi</taxon>
        <taxon>Mammalia</taxon>
        <taxon>Eutheria</taxon>
        <taxon>Euarchontoglires</taxon>
        <taxon>Primates</taxon>
        <taxon>Haplorrhini</taxon>
        <taxon>Catarrhini</taxon>
        <taxon>Hominidae</taxon>
        <taxon>Homo</taxon>
    </lineage>
</organism>
<proteinExistence type="evidence at protein level"/>
<accession>Q8N0Y2</accession>
<accession>Q8TEQ9</accession>
<accession>Q8WU35</accession>
<accession>Q9NUU1</accession>
<dbReference type="EMBL" id="AB052955">
    <property type="protein sequence ID" value="BAC02698.1"/>
    <property type="molecule type" value="mRNA"/>
</dbReference>
<dbReference type="EMBL" id="AB052954">
    <property type="protein sequence ID" value="BAC02697.1"/>
    <property type="molecule type" value="mRNA"/>
</dbReference>
<dbReference type="EMBL" id="AL834130">
    <property type="protein sequence ID" value="CAD38847.1"/>
    <property type="molecule type" value="mRNA"/>
</dbReference>
<dbReference type="EMBL" id="AK074063">
    <property type="protein sequence ID" value="BAB84889.1"/>
    <property type="status" value="ALT_FRAME"/>
    <property type="molecule type" value="mRNA"/>
</dbReference>
<dbReference type="EMBL" id="AK001999">
    <property type="protein sequence ID" value="BAA92028.1"/>
    <property type="molecule type" value="mRNA"/>
</dbReference>
<dbReference type="EMBL" id="BC021282">
    <property type="protein sequence ID" value="AAH21282.1"/>
    <property type="molecule type" value="mRNA"/>
</dbReference>
<dbReference type="CCDS" id="CCDS12939.1">
    <molecule id="Q8N0Y2-1"/>
</dbReference>
<dbReference type="CCDS" id="CCDS59426.1">
    <molecule id="Q8N0Y2-2"/>
</dbReference>
<dbReference type="RefSeq" id="NP_001240721.1">
    <molecule id="Q8N0Y2-2"/>
    <property type="nucleotide sequence ID" value="NM_001253792.2"/>
</dbReference>
<dbReference type="RefSeq" id="NP_060807.2">
    <molecule id="Q8N0Y2-1"/>
    <property type="nucleotide sequence ID" value="NM_018337.3"/>
</dbReference>
<dbReference type="RefSeq" id="XP_005259091.1">
    <molecule id="Q8N0Y2-1"/>
    <property type="nucleotide sequence ID" value="XM_005259034.3"/>
</dbReference>
<dbReference type="RefSeq" id="XP_005259092.1">
    <molecule id="Q8N0Y2-1"/>
    <property type="nucleotide sequence ID" value="XM_005259035.2"/>
</dbReference>
<dbReference type="RefSeq" id="XP_005259093.1">
    <molecule id="Q8N0Y2-1"/>
    <property type="nucleotide sequence ID" value="XM_005259036.2"/>
</dbReference>
<dbReference type="RefSeq" id="XP_011525370.1">
    <property type="nucleotide sequence ID" value="XM_011527068.1"/>
</dbReference>
<dbReference type="RefSeq" id="XP_024307341.1">
    <molecule id="Q8N0Y2-1"/>
    <property type="nucleotide sequence ID" value="XM_024451573.2"/>
</dbReference>
<dbReference type="RefSeq" id="XP_024307343.1">
    <molecule id="Q8N0Y2-1"/>
    <property type="nucleotide sequence ID" value="XM_024451575.2"/>
</dbReference>
<dbReference type="RefSeq" id="XP_024307344.1">
    <molecule id="Q8N0Y2-1"/>
    <property type="nucleotide sequence ID" value="XM_024451576.1"/>
</dbReference>
<dbReference type="RefSeq" id="XP_047294993.1">
    <molecule id="Q8N0Y2-1"/>
    <property type="nucleotide sequence ID" value="XM_047439037.1"/>
</dbReference>
<dbReference type="RefSeq" id="XP_047294994.1">
    <molecule id="Q8N0Y2-1"/>
    <property type="nucleotide sequence ID" value="XM_047439038.1"/>
</dbReference>
<dbReference type="RefSeq" id="XP_047294995.1">
    <molecule id="Q8N0Y2-1"/>
    <property type="nucleotide sequence ID" value="XM_047439039.1"/>
</dbReference>
<dbReference type="RefSeq" id="XP_047294996.1">
    <molecule id="Q8N0Y2-1"/>
    <property type="nucleotide sequence ID" value="XM_047439040.1"/>
</dbReference>
<dbReference type="RefSeq" id="XP_047294997.1">
    <molecule id="Q8N0Y2-2"/>
    <property type="nucleotide sequence ID" value="XM_047439041.1"/>
</dbReference>
<dbReference type="RefSeq" id="XP_047294998.1">
    <molecule id="Q8N0Y2-2"/>
    <property type="nucleotide sequence ID" value="XM_047439042.1"/>
</dbReference>
<dbReference type="RefSeq" id="XP_047294999.1">
    <molecule id="Q8N0Y2-2"/>
    <property type="nucleotide sequence ID" value="XM_047439043.1"/>
</dbReference>
<dbReference type="RefSeq" id="XP_047295000.1">
    <molecule id="Q8N0Y2-2"/>
    <property type="nucleotide sequence ID" value="XM_047439044.1"/>
</dbReference>
<dbReference type="RefSeq" id="XP_054177335.1">
    <molecule id="Q8N0Y2-1"/>
    <property type="nucleotide sequence ID" value="XM_054321360.1"/>
</dbReference>
<dbReference type="RefSeq" id="XP_054177336.1">
    <molecule id="Q8N0Y2-1"/>
    <property type="nucleotide sequence ID" value="XM_054321361.1"/>
</dbReference>
<dbReference type="RefSeq" id="XP_054177337.1">
    <molecule id="Q8N0Y2-1"/>
    <property type="nucleotide sequence ID" value="XM_054321362.1"/>
</dbReference>
<dbReference type="RefSeq" id="XP_054177338.1">
    <molecule id="Q8N0Y2-1"/>
    <property type="nucleotide sequence ID" value="XM_054321363.1"/>
</dbReference>
<dbReference type="RefSeq" id="XP_054177339.1">
    <molecule id="Q8N0Y2-1"/>
    <property type="nucleotide sequence ID" value="XM_054321364.1"/>
</dbReference>
<dbReference type="RefSeq" id="XP_054177340.1">
    <molecule id="Q8N0Y2-1"/>
    <property type="nucleotide sequence ID" value="XM_054321365.1"/>
</dbReference>
<dbReference type="RefSeq" id="XP_054177341.1">
    <molecule id="Q8N0Y2-1"/>
    <property type="nucleotide sequence ID" value="XM_054321366.1"/>
</dbReference>
<dbReference type="RefSeq" id="XP_054177342.1">
    <molecule id="Q8N0Y2-1"/>
    <property type="nucleotide sequence ID" value="XM_054321367.1"/>
</dbReference>
<dbReference type="RefSeq" id="XP_054177343.1">
    <molecule id="Q8N0Y2-1"/>
    <property type="nucleotide sequence ID" value="XM_054321368.1"/>
</dbReference>
<dbReference type="RefSeq" id="XP_054177344.1">
    <molecule id="Q8N0Y2-1"/>
    <property type="nucleotide sequence ID" value="XM_054321369.1"/>
</dbReference>
<dbReference type="RefSeq" id="XP_054177345.1">
    <molecule id="Q8N0Y2-2"/>
    <property type="nucleotide sequence ID" value="XM_054321370.1"/>
</dbReference>
<dbReference type="RefSeq" id="XP_054177346.1">
    <molecule id="Q8N0Y2-2"/>
    <property type="nucleotide sequence ID" value="XM_054321371.1"/>
</dbReference>
<dbReference type="RefSeq" id="XP_054177347.1">
    <molecule id="Q8N0Y2-2"/>
    <property type="nucleotide sequence ID" value="XM_054321372.1"/>
</dbReference>
<dbReference type="RefSeq" id="XP_054177348.1">
    <molecule id="Q8N0Y2-2"/>
    <property type="nucleotide sequence ID" value="XM_054321373.1"/>
</dbReference>
<dbReference type="SMR" id="Q8N0Y2"/>
<dbReference type="BioGRID" id="120593">
    <property type="interactions" value="118"/>
</dbReference>
<dbReference type="FunCoup" id="Q8N0Y2">
    <property type="interactions" value="570"/>
</dbReference>
<dbReference type="IntAct" id="Q8N0Y2">
    <property type="interactions" value="125"/>
</dbReference>
<dbReference type="STRING" id="9606.ENSP00000338860"/>
<dbReference type="iPTMnet" id="Q8N0Y2"/>
<dbReference type="PhosphoSitePlus" id="Q8N0Y2"/>
<dbReference type="BioMuta" id="ZNF444"/>
<dbReference type="DMDM" id="38258800"/>
<dbReference type="jPOST" id="Q8N0Y2"/>
<dbReference type="MassIVE" id="Q8N0Y2"/>
<dbReference type="PaxDb" id="9606-ENSP00000338860"/>
<dbReference type="PeptideAtlas" id="Q8N0Y2"/>
<dbReference type="ProteomicsDB" id="71486">
    <molecule id="Q8N0Y2-1"/>
</dbReference>
<dbReference type="ProteomicsDB" id="71487">
    <molecule id="Q8N0Y2-2"/>
</dbReference>
<dbReference type="Pumba" id="Q8N0Y2"/>
<dbReference type="Antibodypedia" id="19607">
    <property type="antibodies" value="97 antibodies from 20 providers"/>
</dbReference>
<dbReference type="DNASU" id="55311"/>
<dbReference type="Ensembl" id="ENST00000337080.8">
    <molecule id="Q8N0Y2-1"/>
    <property type="protein sequence ID" value="ENSP00000338860.3"/>
    <property type="gene ID" value="ENSG00000167685.15"/>
</dbReference>
<dbReference type="Ensembl" id="ENST00000592949.5">
    <molecule id="Q8N0Y2-2"/>
    <property type="protein sequence ID" value="ENSP00000468069.1"/>
    <property type="gene ID" value="ENSG00000167685.15"/>
</dbReference>
<dbReference type="GeneID" id="55311"/>
<dbReference type="KEGG" id="hsa:55311"/>
<dbReference type="MANE-Select" id="ENST00000337080.8">
    <property type="protein sequence ID" value="ENSP00000338860.3"/>
    <property type="RefSeq nucleotide sequence ID" value="NM_018337.4"/>
    <property type="RefSeq protein sequence ID" value="NP_060807.2"/>
</dbReference>
<dbReference type="UCSC" id="uc002qmm.4">
    <molecule id="Q8N0Y2-1"/>
    <property type="organism name" value="human"/>
</dbReference>
<dbReference type="AGR" id="HGNC:16052"/>
<dbReference type="CTD" id="55311"/>
<dbReference type="DisGeNET" id="55311"/>
<dbReference type="GeneCards" id="ZNF444"/>
<dbReference type="HGNC" id="HGNC:16052">
    <property type="gene designation" value="ZNF444"/>
</dbReference>
<dbReference type="HPA" id="ENSG00000167685">
    <property type="expression patterns" value="Low tissue specificity"/>
</dbReference>
<dbReference type="MalaCards" id="ZNF444"/>
<dbReference type="MIM" id="607874">
    <property type="type" value="gene"/>
</dbReference>
<dbReference type="neXtProt" id="NX_Q8N0Y2"/>
<dbReference type="OpenTargets" id="ENSG00000167685"/>
<dbReference type="PharmGKB" id="PA134984823"/>
<dbReference type="VEuPathDB" id="HostDB:ENSG00000167685"/>
<dbReference type="eggNOG" id="KOG1721">
    <property type="taxonomic scope" value="Eukaryota"/>
</dbReference>
<dbReference type="GeneTree" id="ENSGT00940000162893"/>
<dbReference type="HOGENOM" id="CLU_002678_49_3_1"/>
<dbReference type="InParanoid" id="Q8N0Y2"/>
<dbReference type="OMA" id="WRRFRHF"/>
<dbReference type="OrthoDB" id="6077919at2759"/>
<dbReference type="PAN-GO" id="Q8N0Y2">
    <property type="GO annotations" value="3 GO annotations based on evolutionary models"/>
</dbReference>
<dbReference type="PhylomeDB" id="Q8N0Y2"/>
<dbReference type="TreeFam" id="TF337369"/>
<dbReference type="PathwayCommons" id="Q8N0Y2"/>
<dbReference type="SignaLink" id="Q8N0Y2"/>
<dbReference type="BioGRID-ORCS" id="55311">
    <property type="hits" value="9 hits in 1171 CRISPR screens"/>
</dbReference>
<dbReference type="CD-CODE" id="1A18FFC4">
    <property type="entry name" value="Paraspeckle"/>
</dbReference>
<dbReference type="ChiTaRS" id="ZNF444">
    <property type="organism name" value="human"/>
</dbReference>
<dbReference type="GenomeRNAi" id="55311"/>
<dbReference type="Pharos" id="Q8N0Y2">
    <property type="development level" value="Tdark"/>
</dbReference>
<dbReference type="PRO" id="PR:Q8N0Y2"/>
<dbReference type="Proteomes" id="UP000005640">
    <property type="component" value="Chromosome 19"/>
</dbReference>
<dbReference type="RNAct" id="Q8N0Y2">
    <property type="molecule type" value="protein"/>
</dbReference>
<dbReference type="Bgee" id="ENSG00000167685">
    <property type="expression patterns" value="Expressed in type B pancreatic cell and 204 other cell types or tissues"/>
</dbReference>
<dbReference type="ExpressionAtlas" id="Q8N0Y2">
    <property type="expression patterns" value="baseline and differential"/>
</dbReference>
<dbReference type="GO" id="GO:0005634">
    <property type="term" value="C:nucleus"/>
    <property type="evidence" value="ECO:0007669"/>
    <property type="project" value="UniProtKB-SubCell"/>
</dbReference>
<dbReference type="GO" id="GO:0000981">
    <property type="term" value="F:DNA-binding transcription factor activity, RNA polymerase II-specific"/>
    <property type="evidence" value="ECO:0000318"/>
    <property type="project" value="GO_Central"/>
</dbReference>
<dbReference type="GO" id="GO:0000978">
    <property type="term" value="F:RNA polymerase II cis-regulatory region sequence-specific DNA binding"/>
    <property type="evidence" value="ECO:0000318"/>
    <property type="project" value="GO_Central"/>
</dbReference>
<dbReference type="GO" id="GO:1990837">
    <property type="term" value="F:sequence-specific double-stranded DNA binding"/>
    <property type="evidence" value="ECO:0000314"/>
    <property type="project" value="ARUK-UCL"/>
</dbReference>
<dbReference type="GO" id="GO:0008270">
    <property type="term" value="F:zinc ion binding"/>
    <property type="evidence" value="ECO:0007669"/>
    <property type="project" value="UniProtKB-KW"/>
</dbReference>
<dbReference type="GO" id="GO:0006357">
    <property type="term" value="P:regulation of transcription by RNA polymerase II"/>
    <property type="evidence" value="ECO:0000318"/>
    <property type="project" value="GO_Central"/>
</dbReference>
<dbReference type="CDD" id="cd07936">
    <property type="entry name" value="SCAN"/>
    <property type="match status" value="1"/>
</dbReference>
<dbReference type="FunFam" id="1.10.4020.10:FF:000001">
    <property type="entry name" value="zinc finger protein 263 isoform X1"/>
    <property type="match status" value="1"/>
</dbReference>
<dbReference type="FunFam" id="3.30.160.60:FF:002343">
    <property type="entry name" value="Zinc finger protein 33A"/>
    <property type="match status" value="1"/>
</dbReference>
<dbReference type="FunFam" id="3.30.160.60:FF:001003">
    <property type="entry name" value="Zinc finger protein 444"/>
    <property type="match status" value="1"/>
</dbReference>
<dbReference type="FunFam" id="3.30.160.60:FF:001492">
    <property type="entry name" value="Zinc finger protein 444"/>
    <property type="match status" value="1"/>
</dbReference>
<dbReference type="Gene3D" id="3.30.160.60">
    <property type="entry name" value="Classic Zinc Finger"/>
    <property type="match status" value="4"/>
</dbReference>
<dbReference type="Gene3D" id="1.10.4020.10">
    <property type="entry name" value="DNA breaking-rejoining enzymes"/>
    <property type="match status" value="1"/>
</dbReference>
<dbReference type="InterPro" id="IPR003309">
    <property type="entry name" value="SCAN_dom"/>
</dbReference>
<dbReference type="InterPro" id="IPR038269">
    <property type="entry name" value="SCAN_sf"/>
</dbReference>
<dbReference type="InterPro" id="IPR036236">
    <property type="entry name" value="Znf_C2H2_sf"/>
</dbReference>
<dbReference type="InterPro" id="IPR013087">
    <property type="entry name" value="Znf_C2H2_type"/>
</dbReference>
<dbReference type="PANTHER" id="PTHR23226">
    <property type="entry name" value="ZINC FINGER AND SCAN DOMAIN-CONTAINING"/>
    <property type="match status" value="1"/>
</dbReference>
<dbReference type="PANTHER" id="PTHR23226:SF150">
    <property type="entry name" value="ZINC FINGER PROTEIN 444"/>
    <property type="match status" value="1"/>
</dbReference>
<dbReference type="Pfam" id="PF02023">
    <property type="entry name" value="SCAN"/>
    <property type="match status" value="1"/>
</dbReference>
<dbReference type="Pfam" id="PF00096">
    <property type="entry name" value="zf-C2H2"/>
    <property type="match status" value="2"/>
</dbReference>
<dbReference type="SMART" id="SM00431">
    <property type="entry name" value="SCAN"/>
    <property type="match status" value="1"/>
</dbReference>
<dbReference type="SMART" id="SM00355">
    <property type="entry name" value="ZnF_C2H2"/>
    <property type="match status" value="4"/>
</dbReference>
<dbReference type="SUPFAM" id="SSF57667">
    <property type="entry name" value="beta-beta-alpha zinc fingers"/>
    <property type="match status" value="2"/>
</dbReference>
<dbReference type="SUPFAM" id="SSF47353">
    <property type="entry name" value="Retrovirus capsid dimerization domain-like"/>
    <property type="match status" value="1"/>
</dbReference>
<dbReference type="PROSITE" id="PS50804">
    <property type="entry name" value="SCAN_BOX"/>
    <property type="match status" value="1"/>
</dbReference>
<dbReference type="PROSITE" id="PS00028">
    <property type="entry name" value="ZINC_FINGER_C2H2_1"/>
    <property type="match status" value="3"/>
</dbReference>
<dbReference type="PROSITE" id="PS50157">
    <property type="entry name" value="ZINC_FINGER_C2H2_2"/>
    <property type="match status" value="4"/>
</dbReference>
<comment type="function">
    <text>Transcriptional regulator. Binds to the 5'-flanking critical region of the SCARF1 promoter.</text>
</comment>
<comment type="interaction">
    <interactant intactId="EBI-12010736">
        <id>Q8N0Y2-2</id>
    </interactant>
    <interactant intactId="EBI-11954292">
        <id>Q86V38</id>
        <label>ATN1</label>
    </interactant>
    <organismsDiffer>false</organismsDiffer>
    <experiments>3</experiments>
</comment>
<comment type="interaction">
    <interactant intactId="EBI-12010736">
        <id>Q8N0Y2-2</id>
    </interactant>
    <interactant intactId="EBI-6875961">
        <id>P02489</id>
        <label>CRYAA</label>
    </interactant>
    <organismsDiffer>false</organismsDiffer>
    <experiments>3</experiments>
</comment>
<comment type="interaction">
    <interactant intactId="EBI-12010736">
        <id>Q8N0Y2-2</id>
    </interactant>
    <interactant intactId="EBI-10976677">
        <id>G5E9A7</id>
        <label>DMWD</label>
    </interactant>
    <organismsDiffer>false</organismsDiffer>
    <experiments>3</experiments>
</comment>
<comment type="interaction">
    <interactant intactId="EBI-12010736">
        <id>Q8N0Y2-2</id>
    </interactant>
    <interactant intactId="EBI-739789">
        <id>Q92997</id>
        <label>DVL3</label>
    </interactant>
    <organismsDiffer>false</organismsDiffer>
    <experiments>3</experiments>
</comment>
<comment type="interaction">
    <interactant intactId="EBI-12010736">
        <id>Q8N0Y2-2</id>
    </interactant>
    <interactant intactId="EBI-744302">
        <id>P14136</id>
        <label>GFAP</label>
    </interactant>
    <organismsDiffer>false</organismsDiffer>
    <experiments>3</experiments>
</comment>
<comment type="interaction">
    <interactant intactId="EBI-12010736">
        <id>Q8N0Y2-2</id>
    </interactant>
    <interactant intactId="EBI-25913156">
        <id>O14908-2</id>
        <label>GIPC1</label>
    </interactant>
    <organismsDiffer>false</organismsDiffer>
    <experiments>3</experiments>
</comment>
<comment type="interaction">
    <interactant intactId="EBI-12010736">
        <id>Q8N0Y2-2</id>
    </interactant>
    <interactant intactId="EBI-5916454">
        <id>A6NEM1</id>
        <label>GOLGA6L9</label>
    </interactant>
    <organismsDiffer>false</organismsDiffer>
    <experiments>3</experiments>
</comment>
<comment type="interaction">
    <interactant intactId="EBI-12010736">
        <id>Q8N0Y2-2</id>
    </interactant>
    <interactant intactId="EBI-747754">
        <id>P28799</id>
        <label>GRN</label>
    </interactant>
    <organismsDiffer>false</organismsDiffer>
    <experiments>3</experiments>
</comment>
<comment type="interaction">
    <interactant intactId="EBI-12010736">
        <id>Q8N0Y2-2</id>
    </interactant>
    <interactant intactId="EBI-19954058">
        <id>O15499</id>
        <label>GSC2</label>
    </interactant>
    <organismsDiffer>false</organismsDiffer>
    <experiments>3</experiments>
</comment>
<comment type="interaction">
    <interactant intactId="EBI-12010736">
        <id>Q8N0Y2-2</id>
    </interactant>
    <interactant intactId="EBI-517086">
        <id>O43464</id>
        <label>HTRA2</label>
    </interactant>
    <organismsDiffer>false</organismsDiffer>
    <experiments>3</experiments>
</comment>
<comment type="interaction">
    <interactant intactId="EBI-12010736">
        <id>Q8N0Y2-2</id>
    </interactant>
    <interactant intactId="EBI-466029">
        <id>P42858</id>
        <label>HTT</label>
    </interactant>
    <organismsDiffer>false</organismsDiffer>
    <experiments>9</experiments>
</comment>
<comment type="interaction">
    <interactant intactId="EBI-12010736">
        <id>Q8N0Y2-2</id>
    </interactant>
    <interactant intactId="EBI-399080">
        <id>Q92993</id>
        <label>KAT5</label>
    </interactant>
    <organismsDiffer>false</organismsDiffer>
    <experiments>3</experiments>
</comment>
<comment type="interaction">
    <interactant intactId="EBI-12010736">
        <id>Q8N0Y2-2</id>
    </interactant>
    <interactant intactId="EBI-10975473">
        <id>O60333-2</id>
        <label>KIF1B</label>
    </interactant>
    <organismsDiffer>false</organismsDiffer>
    <experiments>3</experiments>
</comment>
<comment type="interaction">
    <interactant intactId="EBI-12010736">
        <id>Q8N0Y2-2</id>
    </interactant>
    <interactant intactId="EBI-2432309">
        <id>Q92876</id>
        <label>KLK6</label>
    </interactant>
    <organismsDiffer>false</organismsDiffer>
    <experiments>3</experiments>
</comment>
<comment type="interaction">
    <interactant intactId="EBI-12010736">
        <id>Q8N0Y2-2</id>
    </interactant>
    <interactant intactId="EBI-10172290">
        <id>P60409</id>
        <label>KRTAP10-7</label>
    </interactant>
    <organismsDiffer>false</organismsDiffer>
    <experiments>3</experiments>
</comment>
<comment type="interaction">
    <interactant intactId="EBI-12010736">
        <id>Q8N0Y2-2</id>
    </interactant>
    <interactant intactId="EBI-10171774">
        <id>P60410</id>
        <label>KRTAP10-8</label>
    </interactant>
    <organismsDiffer>false</organismsDiffer>
    <experiments>3</experiments>
</comment>
<comment type="interaction">
    <interactant intactId="EBI-12010736">
        <id>Q8N0Y2-2</id>
    </interactant>
    <interactant intactId="EBI-351935">
        <id>P02545</id>
        <label>LMNA</label>
    </interactant>
    <organismsDiffer>false</organismsDiffer>
    <experiments>3</experiments>
</comment>
<comment type="interaction">
    <interactant intactId="EBI-12010736">
        <id>Q8N0Y2-2</id>
    </interactant>
    <interactant intactId="EBI-11742507">
        <id>Q8TAP4-4</id>
        <label>LMO3</label>
    </interactant>
    <organismsDiffer>false</organismsDiffer>
    <experiments>3</experiments>
</comment>
<comment type="interaction">
    <interactant intactId="EBI-12010736">
        <id>Q8N0Y2-2</id>
    </interactant>
    <interactant intactId="EBI-713665">
        <id>P19404</id>
        <label>NDUFV2</label>
    </interactant>
    <organismsDiffer>false</organismsDiffer>
    <experiments>3</experiments>
</comment>
<comment type="interaction">
    <interactant intactId="EBI-12010736">
        <id>Q8N0Y2-2</id>
    </interactant>
    <interactant intactId="EBI-748974">
        <id>Q96CV9</id>
        <label>OPTN</label>
    </interactant>
    <organismsDiffer>false</organismsDiffer>
    <experiments>3</experiments>
</comment>
<comment type="interaction">
    <interactant intactId="EBI-12010736">
        <id>Q8N0Y2-2</id>
    </interactant>
    <interactant intactId="EBI-1307">
        <id>Q13153</id>
        <label>PAK1</label>
    </interactant>
    <organismsDiffer>false</organismsDiffer>
    <experiments>3</experiments>
</comment>
<comment type="interaction">
    <interactant intactId="EBI-12010736">
        <id>Q8N0Y2-2</id>
    </interactant>
    <interactant intactId="EBI-50433196">
        <id>A0A6Q8PF08</id>
        <label>PMP22</label>
    </interactant>
    <organismsDiffer>false</organismsDiffer>
    <experiments>3</experiments>
</comment>
<comment type="interaction">
    <interactant intactId="EBI-12010736">
        <id>Q8N0Y2-2</id>
    </interactant>
    <interactant intactId="EBI-25884072">
        <id>P62937-2</id>
        <label>PPIA</label>
    </interactant>
    <organismsDiffer>false</organismsDiffer>
    <experiments>3</experiments>
</comment>
<comment type="interaction">
    <interactant intactId="EBI-12010736">
        <id>Q8N0Y2-2</id>
    </interactant>
    <interactant intactId="EBI-1383528">
        <id>P17252</id>
        <label>PRKCA</label>
    </interactant>
    <organismsDiffer>false</organismsDiffer>
    <experiments>3</experiments>
</comment>
<comment type="interaction">
    <interactant intactId="EBI-12010736">
        <id>Q8N0Y2-2</id>
    </interactant>
    <interactant intactId="EBI-752074">
        <id>P41219</id>
        <label>PRPH</label>
    </interactant>
    <organismsDiffer>false</organismsDiffer>
    <experiments>3</experiments>
</comment>
<comment type="interaction">
    <interactant intactId="EBI-12010736">
        <id>Q8N0Y2-2</id>
    </interactant>
    <interactant intactId="EBI-749195">
        <id>P60891</id>
        <label>PRPS1</label>
    </interactant>
    <organismsDiffer>false</organismsDiffer>
    <experiments>3</experiments>
</comment>
<comment type="interaction">
    <interactant intactId="EBI-12010736">
        <id>Q8N0Y2-2</id>
    </interactant>
    <interactant intactId="EBI-396669">
        <id>Q9Y3C5</id>
        <label>RNF11</label>
    </interactant>
    <organismsDiffer>false</organismsDiffer>
    <experiments>3</experiments>
</comment>
<comment type="interaction">
    <interactant intactId="EBI-12010736">
        <id>Q8N0Y2-2</id>
    </interactant>
    <interactant intactId="EBI-9090795">
        <id>Q15047-2</id>
        <label>SETDB1</label>
    </interactant>
    <organismsDiffer>false</organismsDiffer>
    <experiments>3</experiments>
</comment>
<comment type="interaction">
    <interactant intactId="EBI-12010736">
        <id>Q8N0Y2-2</id>
    </interactant>
    <interactant intactId="EBI-5235340">
        <id>Q7Z699</id>
        <label>SPRED1</label>
    </interactant>
    <organismsDiffer>false</organismsDiffer>
    <experiments>3</experiments>
</comment>
<comment type="interaction">
    <interactant intactId="EBI-12010736">
        <id>Q8N0Y2-2</id>
    </interactant>
    <interactant intactId="EBI-12806590">
        <id>Q86WV8</id>
        <label>TSC1</label>
    </interactant>
    <organismsDiffer>false</organismsDiffer>
    <experiments>3</experiments>
</comment>
<comment type="interaction">
    <interactant intactId="EBI-12010736">
        <id>Q8N0Y2-2</id>
    </interactant>
    <interactant intactId="EBI-720609">
        <id>O76024</id>
        <label>WFS1</label>
    </interactant>
    <organismsDiffer>false</organismsDiffer>
    <experiments>3</experiments>
</comment>
<comment type="interaction">
    <interactant intactId="EBI-12010736">
        <id>Q8N0Y2-2</id>
    </interactant>
    <interactant intactId="EBI-359832">
        <id>P61981</id>
        <label>YWHAG</label>
    </interactant>
    <organismsDiffer>false</organismsDiffer>
    <experiments>3</experiments>
</comment>
<comment type="interaction">
    <interactant intactId="EBI-12010736">
        <id>Q8N0Y2-2</id>
    </interactant>
    <interactant intactId="EBI-2602314">
        <id>Q15776</id>
        <label>ZKSCAN8</label>
    </interactant>
    <organismsDiffer>false</organismsDiffer>
    <experiments>4</experiments>
</comment>
<comment type="interaction">
    <interactant intactId="EBI-12010736">
        <id>Q8N0Y2-2</id>
    </interactant>
    <interactant intactId="EBI-707773">
        <id>P17028</id>
        <label>ZNF24</label>
    </interactant>
    <organismsDiffer>false</organismsDiffer>
    <experiments>6</experiments>
</comment>
<comment type="interaction">
    <interactant intactId="EBI-12010736">
        <id>Q8N0Y2-2</id>
    </interactant>
    <interactant intactId="EBI-10178224">
        <id>P10073</id>
        <label>ZSCAN22</label>
    </interactant>
    <organismsDiffer>false</organismsDiffer>
    <experiments>3</experiments>
</comment>
<comment type="subcellular location">
    <subcellularLocation>
        <location evidence="2">Nucleus</location>
    </subcellularLocation>
</comment>
<comment type="alternative products">
    <event type="alternative splicing"/>
    <isoform>
        <id>Q8N0Y2-1</id>
        <name>1</name>
        <sequence type="displayed"/>
    </isoform>
    <isoform>
        <id>Q8N0Y2-2</id>
        <name>2</name>
        <sequence type="described" ref="VSP_008798"/>
    </isoform>
</comment>
<comment type="similarity">
    <text evidence="7">Belongs to the krueppel C2H2-type zinc-finger protein family.</text>
</comment>
<comment type="sequence caution" evidence="7">
    <conflict type="frameshift">
        <sequence resource="EMBL-CDS" id="BAB84889"/>
    </conflict>
</comment>